<dbReference type="EC" id="4.1.1.39" evidence="1"/>
<dbReference type="EMBL" id="L01893">
    <property type="protein sequence ID" value="AAA84095.2"/>
    <property type="molecule type" value="Genomic_DNA"/>
</dbReference>
<dbReference type="SMR" id="P28389"/>
<dbReference type="GO" id="GO:0009507">
    <property type="term" value="C:chloroplast"/>
    <property type="evidence" value="ECO:0007669"/>
    <property type="project" value="UniProtKB-SubCell"/>
</dbReference>
<dbReference type="GO" id="GO:0000287">
    <property type="term" value="F:magnesium ion binding"/>
    <property type="evidence" value="ECO:0007669"/>
    <property type="project" value="InterPro"/>
</dbReference>
<dbReference type="GO" id="GO:0004497">
    <property type="term" value="F:monooxygenase activity"/>
    <property type="evidence" value="ECO:0007669"/>
    <property type="project" value="UniProtKB-KW"/>
</dbReference>
<dbReference type="GO" id="GO:0016984">
    <property type="term" value="F:ribulose-bisphosphate carboxylase activity"/>
    <property type="evidence" value="ECO:0007669"/>
    <property type="project" value="UniProtKB-EC"/>
</dbReference>
<dbReference type="GO" id="GO:0009853">
    <property type="term" value="P:photorespiration"/>
    <property type="evidence" value="ECO:0007669"/>
    <property type="project" value="UniProtKB-KW"/>
</dbReference>
<dbReference type="GO" id="GO:0019253">
    <property type="term" value="P:reductive pentose-phosphate cycle"/>
    <property type="evidence" value="ECO:0007669"/>
    <property type="project" value="UniProtKB-KW"/>
</dbReference>
<dbReference type="CDD" id="cd08212">
    <property type="entry name" value="RuBisCO_large_I"/>
    <property type="match status" value="1"/>
</dbReference>
<dbReference type="FunFam" id="3.20.20.110:FF:000001">
    <property type="entry name" value="Ribulose bisphosphate carboxylase large chain"/>
    <property type="match status" value="1"/>
</dbReference>
<dbReference type="FunFam" id="3.30.70.150:FF:000001">
    <property type="entry name" value="Ribulose bisphosphate carboxylase large chain"/>
    <property type="match status" value="1"/>
</dbReference>
<dbReference type="Gene3D" id="3.20.20.110">
    <property type="entry name" value="Ribulose bisphosphate carboxylase, large subunit, C-terminal domain"/>
    <property type="match status" value="1"/>
</dbReference>
<dbReference type="Gene3D" id="3.30.70.150">
    <property type="entry name" value="RuBisCO large subunit, N-terminal domain"/>
    <property type="match status" value="1"/>
</dbReference>
<dbReference type="HAMAP" id="MF_01338">
    <property type="entry name" value="RuBisCO_L_type1"/>
    <property type="match status" value="1"/>
</dbReference>
<dbReference type="InterPro" id="IPR033966">
    <property type="entry name" value="RuBisCO"/>
</dbReference>
<dbReference type="InterPro" id="IPR020878">
    <property type="entry name" value="RuBisCo_large_chain_AS"/>
</dbReference>
<dbReference type="InterPro" id="IPR000685">
    <property type="entry name" value="RuBisCO_lsu_C"/>
</dbReference>
<dbReference type="InterPro" id="IPR036376">
    <property type="entry name" value="RuBisCO_lsu_C_sf"/>
</dbReference>
<dbReference type="InterPro" id="IPR017443">
    <property type="entry name" value="RuBisCO_lsu_fd_N"/>
</dbReference>
<dbReference type="InterPro" id="IPR036422">
    <property type="entry name" value="RuBisCO_lsu_N_sf"/>
</dbReference>
<dbReference type="InterPro" id="IPR020888">
    <property type="entry name" value="RuBisCO_lsuI"/>
</dbReference>
<dbReference type="NCBIfam" id="NF003252">
    <property type="entry name" value="PRK04208.1"/>
    <property type="match status" value="1"/>
</dbReference>
<dbReference type="PANTHER" id="PTHR42704">
    <property type="entry name" value="RIBULOSE BISPHOSPHATE CARBOXYLASE"/>
    <property type="match status" value="1"/>
</dbReference>
<dbReference type="PANTHER" id="PTHR42704:SF15">
    <property type="entry name" value="RIBULOSE BISPHOSPHATE CARBOXYLASE LARGE CHAIN"/>
    <property type="match status" value="1"/>
</dbReference>
<dbReference type="Pfam" id="PF00016">
    <property type="entry name" value="RuBisCO_large"/>
    <property type="match status" value="1"/>
</dbReference>
<dbReference type="Pfam" id="PF02788">
    <property type="entry name" value="RuBisCO_large_N"/>
    <property type="match status" value="1"/>
</dbReference>
<dbReference type="SFLD" id="SFLDG01052">
    <property type="entry name" value="RuBisCO"/>
    <property type="match status" value="1"/>
</dbReference>
<dbReference type="SFLD" id="SFLDS00014">
    <property type="entry name" value="RuBisCO"/>
    <property type="match status" value="1"/>
</dbReference>
<dbReference type="SFLD" id="SFLDG00301">
    <property type="entry name" value="RuBisCO-like_proteins"/>
    <property type="match status" value="1"/>
</dbReference>
<dbReference type="SUPFAM" id="SSF51649">
    <property type="entry name" value="RuBisCo, C-terminal domain"/>
    <property type="match status" value="1"/>
</dbReference>
<dbReference type="SUPFAM" id="SSF54966">
    <property type="entry name" value="RuBisCO, large subunit, small (N-terminal) domain"/>
    <property type="match status" value="1"/>
</dbReference>
<dbReference type="PROSITE" id="PS00157">
    <property type="entry name" value="RUBISCO_LARGE"/>
    <property type="match status" value="1"/>
</dbReference>
<protein>
    <recommendedName>
        <fullName evidence="1">Ribulose bisphosphate carboxylase large chain</fullName>
        <shortName evidence="1">RuBisCO large subunit</shortName>
        <ecNumber evidence="1">4.1.1.39</ecNumber>
    </recommendedName>
</protein>
<geneLocation type="chloroplast"/>
<gene>
    <name evidence="1" type="primary">rbcL</name>
</gene>
<keyword id="KW-0113">Calvin cycle</keyword>
<keyword id="KW-0120">Carbon dioxide fixation</keyword>
<keyword id="KW-0150">Chloroplast</keyword>
<keyword id="KW-1015">Disulfide bond</keyword>
<keyword id="KW-0456">Lyase</keyword>
<keyword id="KW-0460">Magnesium</keyword>
<keyword id="KW-0479">Metal-binding</keyword>
<keyword id="KW-0488">Methylation</keyword>
<keyword id="KW-0503">Monooxygenase</keyword>
<keyword id="KW-0560">Oxidoreductase</keyword>
<keyword id="KW-0601">Photorespiration</keyword>
<keyword id="KW-0602">Photosynthesis</keyword>
<keyword id="KW-0934">Plastid</keyword>
<name>RBL_CASEQ</name>
<reference key="1">
    <citation type="journal article" date="1992" name="Science">
        <title>Carnivorous plants: phylogeny and structural evolution.</title>
        <authorList>
            <person name="Albert V.A."/>
            <person name="Williams S.E."/>
            <person name="Chase M.W."/>
        </authorList>
    </citation>
    <scope>NUCLEOTIDE SEQUENCE [GENOMIC DNA]</scope>
</reference>
<comment type="function">
    <text evidence="1">RuBisCO catalyzes two reactions: the carboxylation of D-ribulose 1,5-bisphosphate, the primary event in carbon dioxide fixation, as well as the oxidative fragmentation of the pentose substrate in the photorespiration process. Both reactions occur simultaneously and in competition at the same active site.</text>
</comment>
<comment type="catalytic activity">
    <reaction evidence="1">
        <text>2 (2R)-3-phosphoglycerate + 2 H(+) = D-ribulose 1,5-bisphosphate + CO2 + H2O</text>
        <dbReference type="Rhea" id="RHEA:23124"/>
        <dbReference type="ChEBI" id="CHEBI:15377"/>
        <dbReference type="ChEBI" id="CHEBI:15378"/>
        <dbReference type="ChEBI" id="CHEBI:16526"/>
        <dbReference type="ChEBI" id="CHEBI:57870"/>
        <dbReference type="ChEBI" id="CHEBI:58272"/>
        <dbReference type="EC" id="4.1.1.39"/>
    </reaction>
</comment>
<comment type="catalytic activity">
    <reaction evidence="1">
        <text>D-ribulose 1,5-bisphosphate + O2 = 2-phosphoglycolate + (2R)-3-phosphoglycerate + 2 H(+)</text>
        <dbReference type="Rhea" id="RHEA:36631"/>
        <dbReference type="ChEBI" id="CHEBI:15378"/>
        <dbReference type="ChEBI" id="CHEBI:15379"/>
        <dbReference type="ChEBI" id="CHEBI:57870"/>
        <dbReference type="ChEBI" id="CHEBI:58033"/>
        <dbReference type="ChEBI" id="CHEBI:58272"/>
    </reaction>
</comment>
<comment type="cofactor">
    <cofactor evidence="1">
        <name>Mg(2+)</name>
        <dbReference type="ChEBI" id="CHEBI:18420"/>
    </cofactor>
    <text evidence="1">Binds 1 Mg(2+) ion per subunit.</text>
</comment>
<comment type="subunit">
    <text evidence="1">Heterohexadecamer of 8 large chains and 8 small chains; disulfide-linked. The disulfide link is formed within the large subunit homodimers.</text>
</comment>
<comment type="subcellular location">
    <subcellularLocation>
        <location>Plastid</location>
        <location>Chloroplast</location>
    </subcellularLocation>
</comment>
<comment type="PTM">
    <text evidence="1">The disulfide bond which can form in the large chain dimeric partners within the hexadecamer appears to be associated with oxidative stress and protein turnover.</text>
</comment>
<comment type="miscellaneous">
    <text evidence="1">The basic functional RuBisCO is composed of a large chain homodimer in a 'head-to-tail' conformation. In form I RuBisCO this homodimer is arranged in a barrel-like tetramer with the small subunits forming a tetrameric 'cap' on each end of the 'barrel'.</text>
</comment>
<comment type="similarity">
    <text evidence="1">Belongs to the RuBisCO large chain family. Type I subfamily.</text>
</comment>
<organism>
    <name type="scientific">Casuarina equisetifolia</name>
    <name type="common">Beach she-oak</name>
    <name type="synonym">Casuarina litorea</name>
    <dbReference type="NCBI Taxonomy" id="3523"/>
    <lineage>
        <taxon>Eukaryota</taxon>
        <taxon>Viridiplantae</taxon>
        <taxon>Streptophyta</taxon>
        <taxon>Embryophyta</taxon>
        <taxon>Tracheophyta</taxon>
        <taxon>Spermatophyta</taxon>
        <taxon>Magnoliopsida</taxon>
        <taxon>eudicotyledons</taxon>
        <taxon>Gunneridae</taxon>
        <taxon>Pentapetalae</taxon>
        <taxon>rosids</taxon>
        <taxon>fabids</taxon>
        <taxon>Fagales</taxon>
        <taxon>Casuarinaceae</taxon>
        <taxon>Casuarina</taxon>
    </lineage>
</organism>
<accession>P28389</accession>
<feature type="chain" id="PRO_0000062399" description="Ribulose bisphosphate carboxylase large chain">
    <location>
        <begin position="1" status="less than"/>
        <end position="465"/>
    </location>
</feature>
<feature type="active site" description="Proton acceptor" evidence="1">
    <location>
        <position position="165"/>
    </location>
</feature>
<feature type="active site" description="Proton acceptor" evidence="1">
    <location>
        <position position="284"/>
    </location>
</feature>
<feature type="binding site" description="in homodimeric partner" evidence="1">
    <location>
        <position position="113"/>
    </location>
    <ligand>
        <name>substrate</name>
    </ligand>
</feature>
<feature type="binding site" evidence="1">
    <location>
        <position position="163"/>
    </location>
    <ligand>
        <name>substrate</name>
    </ligand>
</feature>
<feature type="binding site" evidence="1">
    <location>
        <position position="167"/>
    </location>
    <ligand>
        <name>substrate</name>
    </ligand>
</feature>
<feature type="binding site" description="via carbamate group" evidence="1">
    <location>
        <position position="191"/>
    </location>
    <ligand>
        <name>Mg(2+)</name>
        <dbReference type="ChEBI" id="CHEBI:18420"/>
    </ligand>
</feature>
<feature type="binding site" evidence="1">
    <location>
        <position position="193"/>
    </location>
    <ligand>
        <name>Mg(2+)</name>
        <dbReference type="ChEBI" id="CHEBI:18420"/>
    </ligand>
</feature>
<feature type="binding site" evidence="1">
    <location>
        <position position="194"/>
    </location>
    <ligand>
        <name>Mg(2+)</name>
        <dbReference type="ChEBI" id="CHEBI:18420"/>
    </ligand>
</feature>
<feature type="binding site" evidence="1">
    <location>
        <position position="285"/>
    </location>
    <ligand>
        <name>substrate</name>
    </ligand>
</feature>
<feature type="binding site" evidence="1">
    <location>
        <position position="317"/>
    </location>
    <ligand>
        <name>substrate</name>
    </ligand>
</feature>
<feature type="binding site" evidence="1">
    <location>
        <position position="369"/>
    </location>
    <ligand>
        <name>substrate</name>
    </ligand>
</feature>
<feature type="site" description="Transition state stabilizer" evidence="1">
    <location>
        <position position="324"/>
    </location>
</feature>
<feature type="modified residue" description="N6,N6,N6-trimethyllysine" evidence="1">
    <location>
        <position position="4"/>
    </location>
</feature>
<feature type="modified residue" description="N6-carboxylysine" evidence="1">
    <location>
        <position position="191"/>
    </location>
</feature>
<feature type="disulfide bond" description="Interchain; in linked form" evidence="1">
    <location>
        <position position="237"/>
    </location>
</feature>
<feature type="non-terminal residue">
    <location>
        <position position="1"/>
    </location>
</feature>
<evidence type="ECO:0000255" key="1">
    <source>
        <dbReference type="HAMAP-Rule" id="MF_01338"/>
    </source>
</evidence>
<proteinExistence type="inferred from homology"/>
<sequence length="465" mass="51576">VGFKAGVKDYKLTYYTPDYETKDTDILAAFRVTPQPGVPPEEAGAAVAAESSTGTWTTVWTDGVTSLDRYKGRCYHIEPVAGEESQFIAYVAYPLDLFEEGSVTNMFTSIVGNVFGFKALRALRLEDLRIPTAYSKTFQGPPHGIQVERDKLNKYGRPLLGCTIKPKLGLSAKNYGRAVYECLRGGLDFTKDDENVNSQPFMRWRDRFLFCAEALYKAQAETGEIKGHYLNATAGTCEEMMKRAIFARELGVPIVMHDYLTGGFTANTSLAHYCRDNGLLLHIHRAMHAVIDRQKNHGMHFRVLAKALRLSGGDHIHAGTVVGKLEGERDITLGFVDLLRDDYFEKDRSRGIYFTQDWVSLPGVLPVASGGIHVWHMPALTEIFGDDSVLQFGGGTLGHPWGNAPGAVANRVALEACVQARNEGRDLAREGNEIIREAAKWSPELAAACEVWKEIKFEFPAMDTL</sequence>